<organism>
    <name type="scientific">Otolemur garnettii</name>
    <name type="common">Small-eared galago</name>
    <name type="synonym">Garnett's greater bushbaby</name>
    <dbReference type="NCBI Taxonomy" id="30611"/>
    <lineage>
        <taxon>Eukaryota</taxon>
        <taxon>Metazoa</taxon>
        <taxon>Chordata</taxon>
        <taxon>Craniata</taxon>
        <taxon>Vertebrata</taxon>
        <taxon>Euteleostomi</taxon>
        <taxon>Mammalia</taxon>
        <taxon>Eutheria</taxon>
        <taxon>Euarchontoglires</taxon>
        <taxon>Primates</taxon>
        <taxon>Strepsirrhini</taxon>
        <taxon>Lorisiformes</taxon>
        <taxon>Galagidae</taxon>
        <taxon>Otolemur</taxon>
    </lineage>
</organism>
<reference key="1">
    <citation type="submission" date="2011-03" db="EMBL/GenBank/DDBJ databases">
        <title>Version 3 of the genome sequence of Otolemur garnettii(Bushbaby).</title>
        <authorList>
            <consortium name="The Broad Institute Genome Sequencing Platform"/>
            <person name="Di Palma F."/>
            <person name="Johnson J."/>
            <person name="Lander E.S."/>
            <person name="Lindblad-Toh K."/>
            <person name="Jaffe D.B."/>
            <person name="Gnerre S."/>
            <person name="MacCallum I."/>
            <person name="Przybylski D."/>
            <person name="Ribeiro F.J."/>
            <person name="Burton J.N."/>
            <person name="Walker B.J."/>
            <person name="Sharpe T."/>
            <person name="Hall G."/>
        </authorList>
    </citation>
    <scope>NUCLEOTIDE SEQUENCE [LARGE SCALE GENOMIC DNA]</scope>
</reference>
<accession>B5FWC0</accession>
<feature type="chain" id="PRO_0000366121" description="Large ribosomal subunit protein uL23m">
    <location>
        <begin position="1"/>
        <end position="153"/>
    </location>
</feature>
<feature type="region of interest" description="Disordered" evidence="2">
    <location>
        <begin position="131"/>
        <end position="153"/>
    </location>
</feature>
<name>RM23_OTOGA</name>
<proteinExistence type="inferred from homology"/>
<gene>
    <name type="primary">MRPL23</name>
</gene>
<dbReference type="EMBL" id="DP000898">
    <property type="protein sequence ID" value="ACH53101.1"/>
    <property type="molecule type" value="Genomic_DNA"/>
</dbReference>
<dbReference type="RefSeq" id="XP_003798461.1">
    <property type="nucleotide sequence ID" value="XM_003798413.3"/>
</dbReference>
<dbReference type="SMR" id="B5FWC0"/>
<dbReference type="FunCoup" id="B5FWC0">
    <property type="interactions" value="222"/>
</dbReference>
<dbReference type="STRING" id="30611.ENSOGAP00000020186"/>
<dbReference type="Ensembl" id="ENSOGAT00000028417.1">
    <property type="protein sequence ID" value="ENSOGAP00000020186.1"/>
    <property type="gene ID" value="ENSOGAG00000029988.1"/>
</dbReference>
<dbReference type="GeneID" id="100947594"/>
<dbReference type="KEGG" id="oga:100947594"/>
<dbReference type="CTD" id="6150"/>
<dbReference type="eggNOG" id="KOG4089">
    <property type="taxonomic scope" value="Eukaryota"/>
</dbReference>
<dbReference type="GeneTree" id="ENSGT00390000007739"/>
<dbReference type="HOGENOM" id="CLU_103097_1_0_1"/>
<dbReference type="InParanoid" id="B5FWC0"/>
<dbReference type="OMA" id="QMGDITW"/>
<dbReference type="OrthoDB" id="275582at2759"/>
<dbReference type="TreeFam" id="TF105852"/>
<dbReference type="Proteomes" id="UP000005225">
    <property type="component" value="Unassembled WGS sequence"/>
</dbReference>
<dbReference type="GO" id="GO:0005762">
    <property type="term" value="C:mitochondrial large ribosomal subunit"/>
    <property type="evidence" value="ECO:0000250"/>
    <property type="project" value="UniProtKB"/>
</dbReference>
<dbReference type="GO" id="GO:0003735">
    <property type="term" value="F:structural constituent of ribosome"/>
    <property type="evidence" value="ECO:0007669"/>
    <property type="project" value="InterPro"/>
</dbReference>
<dbReference type="GO" id="GO:0032543">
    <property type="term" value="P:mitochondrial translation"/>
    <property type="evidence" value="ECO:0007669"/>
    <property type="project" value="TreeGrafter"/>
</dbReference>
<dbReference type="FunFam" id="3.30.70.330:FF:000284">
    <property type="entry name" value="39S ribosomal protein L23, mitochondrial"/>
    <property type="match status" value="1"/>
</dbReference>
<dbReference type="Gene3D" id="3.30.70.330">
    <property type="match status" value="1"/>
</dbReference>
<dbReference type="InterPro" id="IPR012677">
    <property type="entry name" value="Nucleotide-bd_a/b_plait_sf"/>
</dbReference>
<dbReference type="InterPro" id="IPR013025">
    <property type="entry name" value="Ribosomal_uL23-like"/>
</dbReference>
<dbReference type="InterPro" id="IPR012678">
    <property type="entry name" value="Ribosomal_uL23/eL15/eS24_sf"/>
</dbReference>
<dbReference type="PANTHER" id="PTHR12059:SF5">
    <property type="entry name" value="LARGE RIBOSOMAL SUBUNIT PROTEIN UL23M"/>
    <property type="match status" value="1"/>
</dbReference>
<dbReference type="PANTHER" id="PTHR12059">
    <property type="entry name" value="RIBOSOMAL PROTEIN L23-RELATED"/>
    <property type="match status" value="1"/>
</dbReference>
<dbReference type="Pfam" id="PF00276">
    <property type="entry name" value="Ribosomal_L23"/>
    <property type="match status" value="1"/>
</dbReference>
<dbReference type="SUPFAM" id="SSF54189">
    <property type="entry name" value="Ribosomal proteins S24e, L23 and L15e"/>
    <property type="match status" value="1"/>
</dbReference>
<keyword id="KW-0496">Mitochondrion</keyword>
<keyword id="KW-1185">Reference proteome</keyword>
<keyword id="KW-0687">Ribonucleoprotein</keyword>
<keyword id="KW-0689">Ribosomal protein</keyword>
<sequence length="153" mass="17831">MARNVLYPLYQLGGPQLRVFRTNFFIQLVRPGTAQPEDTVQFRIPMEMTRVDLRNYLERIYNVPVAAVRTRVQHGSHRKRDHRNVRIKKPDYKVAYVQLAHGQTFTFPDLFPEKDPRLEGSSVDEAQSTFMADEQQRQGSDPQRGGVPNWFSL</sequence>
<protein>
    <recommendedName>
        <fullName evidence="3">Large ribosomal subunit protein uL23m</fullName>
    </recommendedName>
    <alternativeName>
        <fullName>39S ribosomal protein L23, mitochondrial</fullName>
        <shortName>L23mt</shortName>
        <shortName>MRP-L23</shortName>
    </alternativeName>
</protein>
<comment type="subunit">
    <text evidence="1">Component of the mitochondrial ribosome large subunit (39S) which comprises a 16S rRNA and about 50 distinct proteins.</text>
</comment>
<comment type="subcellular location">
    <subcellularLocation>
        <location evidence="1">Mitochondrion</location>
    </subcellularLocation>
</comment>
<comment type="similarity">
    <text evidence="3">Belongs to the universal ribosomal protein uL23 family.</text>
</comment>
<evidence type="ECO:0000250" key="1">
    <source>
        <dbReference type="UniProtKB" id="Q16540"/>
    </source>
</evidence>
<evidence type="ECO:0000256" key="2">
    <source>
        <dbReference type="SAM" id="MobiDB-lite"/>
    </source>
</evidence>
<evidence type="ECO:0000305" key="3"/>